<keyword id="KW-0472">Membrane</keyword>
<keyword id="KW-0496">Mitochondrion</keyword>
<keyword id="KW-0999">Mitochondrion inner membrane</keyword>
<keyword id="KW-1185">Reference proteome</keyword>
<keyword id="KW-0677">Repeat</keyword>
<keyword id="KW-0812">Transmembrane</keyword>
<keyword id="KW-1133">Transmembrane helix</keyword>
<keyword id="KW-0813">Transport</keyword>
<reference key="1">
    <citation type="journal article" date="2015" name="Genome Announc.">
        <title>Draft genome sequence of the cellulolytic fungus Chaetomium globosum.</title>
        <authorList>
            <person name="Cuomo C.A."/>
            <person name="Untereiner W.A."/>
            <person name="Ma L.-J."/>
            <person name="Grabherr M."/>
            <person name="Birren B.W."/>
        </authorList>
    </citation>
    <scope>NUCLEOTIDE SEQUENCE [LARGE SCALE GENOMIC DNA]</scope>
    <source>
        <strain>ATCC 6205 / CBS 148.51 / DSM 1962 / NBRC 6347 / NRRL 1970</strain>
    </source>
</reference>
<proteinExistence type="inferred from homology"/>
<feature type="chain" id="PRO_0000320462" description="Mitochondrial thiamine pyrophosphate carrier 1">
    <location>
        <begin position="1"/>
        <end position="325"/>
    </location>
</feature>
<feature type="transmembrane region" description="Helical; Name=1" evidence="2">
    <location>
        <begin position="17"/>
        <end position="35"/>
    </location>
</feature>
<feature type="transmembrane region" description="Helical; Name=2" evidence="2">
    <location>
        <begin position="92"/>
        <end position="108"/>
    </location>
</feature>
<feature type="transmembrane region" description="Helical; Name=3" evidence="2">
    <location>
        <begin position="127"/>
        <end position="143"/>
    </location>
</feature>
<feature type="transmembrane region" description="Helical; Name=4" evidence="2">
    <location>
        <begin position="184"/>
        <end position="200"/>
    </location>
</feature>
<feature type="transmembrane region" description="Helical; Name=5" evidence="2">
    <location>
        <begin position="223"/>
        <end position="239"/>
    </location>
</feature>
<feature type="transmembrane region" description="Helical; Name=6" evidence="2">
    <location>
        <begin position="287"/>
        <end position="304"/>
    </location>
</feature>
<feature type="repeat" description="Solcar 1">
    <location>
        <begin position="12"/>
        <end position="111"/>
    </location>
</feature>
<feature type="repeat" description="Solcar 2">
    <location>
        <begin position="122"/>
        <end position="209"/>
    </location>
</feature>
<feature type="repeat" description="Solcar 3">
    <location>
        <begin position="216"/>
        <end position="312"/>
    </location>
</feature>
<name>TPC1_CHAGB</name>
<comment type="function">
    <text evidence="1">Mitochondrial transporter that mediates uptake of thiamine pyrophosphate (ThPP) into mitochondria.</text>
</comment>
<comment type="subcellular location">
    <subcellularLocation>
        <location evidence="1">Mitochondrion inner membrane</location>
        <topology evidence="1">Multi-pass membrane protein</topology>
    </subcellularLocation>
</comment>
<comment type="similarity">
    <text evidence="3">Belongs to the mitochondrial carrier (TC 2.A.29) family.</text>
</comment>
<comment type="sequence caution" evidence="3">
    <conflict type="erroneous gene model prediction">
        <sequence resource="EMBL-CDS" id="EAQ92753"/>
    </conflict>
</comment>
<accession>Q2HFL6</accession>
<organism>
    <name type="scientific">Chaetomium globosum (strain ATCC 6205 / CBS 148.51 / DSM 1962 / NBRC 6347 / NRRL 1970)</name>
    <name type="common">Soil fungus</name>
    <dbReference type="NCBI Taxonomy" id="306901"/>
    <lineage>
        <taxon>Eukaryota</taxon>
        <taxon>Fungi</taxon>
        <taxon>Dikarya</taxon>
        <taxon>Ascomycota</taxon>
        <taxon>Pezizomycotina</taxon>
        <taxon>Sordariomycetes</taxon>
        <taxon>Sordariomycetidae</taxon>
        <taxon>Sordariales</taxon>
        <taxon>Chaetomiaceae</taxon>
        <taxon>Chaetomium</taxon>
    </lineage>
</organism>
<dbReference type="EMBL" id="CH408029">
    <property type="protein sequence ID" value="EAQ92753.1"/>
    <property type="status" value="ALT_SEQ"/>
    <property type="molecule type" value="Genomic_DNA"/>
</dbReference>
<dbReference type="RefSeq" id="XP_001220209.1">
    <property type="nucleotide sequence ID" value="XM_001220208.1"/>
</dbReference>
<dbReference type="SMR" id="Q2HFL6"/>
<dbReference type="FunCoup" id="Q2HFL6">
    <property type="interactions" value="24"/>
</dbReference>
<dbReference type="STRING" id="306901.Q2HFL6"/>
<dbReference type="GeneID" id="4386398"/>
<dbReference type="VEuPathDB" id="FungiDB:CHGG_00988"/>
<dbReference type="eggNOG" id="KOG0752">
    <property type="taxonomic scope" value="Eukaryota"/>
</dbReference>
<dbReference type="HOGENOM" id="CLU_015166_10_3_1"/>
<dbReference type="InParanoid" id="Q2HFL6"/>
<dbReference type="OrthoDB" id="18574at2759"/>
<dbReference type="Proteomes" id="UP000001056">
    <property type="component" value="Unassembled WGS sequence"/>
</dbReference>
<dbReference type="GO" id="GO:0005743">
    <property type="term" value="C:mitochondrial inner membrane"/>
    <property type="evidence" value="ECO:0007669"/>
    <property type="project" value="UniProtKB-SubCell"/>
</dbReference>
<dbReference type="GO" id="GO:0055085">
    <property type="term" value="P:transmembrane transport"/>
    <property type="evidence" value="ECO:0007669"/>
    <property type="project" value="InterPro"/>
</dbReference>
<dbReference type="Gene3D" id="1.50.40.10">
    <property type="entry name" value="Mitochondrial carrier domain"/>
    <property type="match status" value="1"/>
</dbReference>
<dbReference type="InterPro" id="IPR002067">
    <property type="entry name" value="Mit_carrier"/>
</dbReference>
<dbReference type="InterPro" id="IPR018108">
    <property type="entry name" value="Mitochondrial_sb/sol_carrier"/>
</dbReference>
<dbReference type="InterPro" id="IPR023395">
    <property type="entry name" value="Mt_carrier_dom_sf"/>
</dbReference>
<dbReference type="PANTHER" id="PTHR24089">
    <property type="entry name" value="SOLUTE CARRIER FAMILY 25"/>
    <property type="match status" value="1"/>
</dbReference>
<dbReference type="Pfam" id="PF00153">
    <property type="entry name" value="Mito_carr"/>
    <property type="match status" value="2"/>
</dbReference>
<dbReference type="PRINTS" id="PR00926">
    <property type="entry name" value="MITOCARRIER"/>
</dbReference>
<dbReference type="SUPFAM" id="SSF103506">
    <property type="entry name" value="Mitochondrial carrier"/>
    <property type="match status" value="1"/>
</dbReference>
<dbReference type="PROSITE" id="PS50920">
    <property type="entry name" value="SOLCAR"/>
    <property type="match status" value="3"/>
</dbReference>
<sequence length="325" mass="35755">MSLKGDRLKDEGSRLQVTAAGATAGLVARFVIAPLDVVKIRLQLQTHSLSDPLSHRDLHGGPIYKGTLPTLRHILRSEGITGLWKGNVPAELLYVCYSAIQFTTYRTTTLLLHQTLGEGTLPPSAESFVAGAIGGGTATAATYPLDPAAHALRRPGQRSRVCESVARRGPDWVVRRAPVGFFGVWDRAWAQIIPYMSFFFATYETLRPHLSELELPFSSSSAVARTMASVMAKSRTFPLDLVRKRIQVQSPTRGRYVHKNIPEYYGGTVGALRTILQREGLRGLYRGLTVSLLKAAPASAVTMWTYERALKFYSGVGEKGEEQRL</sequence>
<evidence type="ECO:0000250" key="1"/>
<evidence type="ECO:0000255" key="2"/>
<evidence type="ECO:0000305" key="3"/>
<gene>
    <name type="primary">TPC1</name>
    <name type="ORF">CHGG_00988</name>
</gene>
<protein>
    <recommendedName>
        <fullName>Mitochondrial thiamine pyrophosphate carrier 1</fullName>
    </recommendedName>
</protein>